<sequence>MHNDLKEVLLTEEDIQNICKELGAQLTKDYQGKPLVCVGILKGSAMFMSDLIKRIDTHLSIDFMDVSSYHGGTESTGEVQIIKDLGSSIENKDVLIIEDILETGTTLKSITELLQSRKVNSLEIVTLLDKPNRRKADIEAKYVGKKIPDEFVVGYGLDYRELYRNLPYIGTLKPEVYSN</sequence>
<protein>
    <recommendedName>
        <fullName>Hypoxanthine-guanine phosphoribosyltransferase</fullName>
        <shortName>HGPRT</shortName>
        <shortName>HGPRTase</shortName>
        <ecNumber evidence="3">2.4.2.8</ecNumber>
    </recommendedName>
</protein>
<reference key="1">
    <citation type="journal article" date="2005" name="J. Bacteriol.">
        <title>Insights on evolution of virulence and resistance from the complete genome analysis of an early methicillin-resistant Staphylococcus aureus strain and a biofilm-producing methicillin-resistant Staphylococcus epidermidis strain.</title>
        <authorList>
            <person name="Gill S.R."/>
            <person name="Fouts D.E."/>
            <person name="Archer G.L."/>
            <person name="Mongodin E.F."/>
            <person name="DeBoy R.T."/>
            <person name="Ravel J."/>
            <person name="Paulsen I.T."/>
            <person name="Kolonay J.F."/>
            <person name="Brinkac L.M."/>
            <person name="Beanan M.J."/>
            <person name="Dodson R.J."/>
            <person name="Daugherty S.C."/>
            <person name="Madupu R."/>
            <person name="Angiuoli S.V."/>
            <person name="Durkin A.S."/>
            <person name="Haft D.H."/>
            <person name="Vamathevan J.J."/>
            <person name="Khouri H."/>
            <person name="Utterback T.R."/>
            <person name="Lee C."/>
            <person name="Dimitrov G."/>
            <person name="Jiang L."/>
            <person name="Qin H."/>
            <person name="Weidman J."/>
            <person name="Tran K."/>
            <person name="Kang K.H."/>
            <person name="Hance I.R."/>
            <person name="Nelson K.E."/>
            <person name="Fraser C.M."/>
        </authorList>
    </citation>
    <scope>NUCLEOTIDE SEQUENCE [LARGE SCALE GENOMIC DNA]</scope>
    <source>
        <strain>COL</strain>
    </source>
</reference>
<dbReference type="EC" id="2.4.2.8" evidence="3"/>
<dbReference type="EMBL" id="CP000046">
    <property type="protein sequence ID" value="AAW37666.1"/>
    <property type="molecule type" value="Genomic_DNA"/>
</dbReference>
<dbReference type="RefSeq" id="WP_000551283.1">
    <property type="nucleotide sequence ID" value="NZ_JBGOFO010000012.1"/>
</dbReference>
<dbReference type="SMR" id="Q5HIG5"/>
<dbReference type="KEGG" id="sac:SACOL0554"/>
<dbReference type="HOGENOM" id="CLU_073615_0_0_9"/>
<dbReference type="UniPathway" id="UPA00591">
    <property type="reaction ID" value="UER00648"/>
</dbReference>
<dbReference type="UniPathway" id="UPA00909">
    <property type="reaction ID" value="UER00887"/>
</dbReference>
<dbReference type="Proteomes" id="UP000000530">
    <property type="component" value="Chromosome"/>
</dbReference>
<dbReference type="GO" id="GO:0005829">
    <property type="term" value="C:cytosol"/>
    <property type="evidence" value="ECO:0007669"/>
    <property type="project" value="TreeGrafter"/>
</dbReference>
<dbReference type="GO" id="GO:0052657">
    <property type="term" value="F:guanine phosphoribosyltransferase activity"/>
    <property type="evidence" value="ECO:0007669"/>
    <property type="project" value="RHEA"/>
</dbReference>
<dbReference type="GO" id="GO:0004422">
    <property type="term" value="F:hypoxanthine phosphoribosyltransferase activity"/>
    <property type="evidence" value="ECO:0007669"/>
    <property type="project" value="InterPro"/>
</dbReference>
<dbReference type="GO" id="GO:0000287">
    <property type="term" value="F:magnesium ion binding"/>
    <property type="evidence" value="ECO:0007669"/>
    <property type="project" value="TreeGrafter"/>
</dbReference>
<dbReference type="GO" id="GO:0000166">
    <property type="term" value="F:nucleotide binding"/>
    <property type="evidence" value="ECO:0007669"/>
    <property type="project" value="UniProtKB-KW"/>
</dbReference>
<dbReference type="GO" id="GO:0032263">
    <property type="term" value="P:GMP salvage"/>
    <property type="evidence" value="ECO:0007669"/>
    <property type="project" value="UniProtKB-UniPathway"/>
</dbReference>
<dbReference type="GO" id="GO:0006178">
    <property type="term" value="P:guanine salvage"/>
    <property type="evidence" value="ECO:0007669"/>
    <property type="project" value="TreeGrafter"/>
</dbReference>
<dbReference type="GO" id="GO:0046100">
    <property type="term" value="P:hypoxanthine metabolic process"/>
    <property type="evidence" value="ECO:0007669"/>
    <property type="project" value="TreeGrafter"/>
</dbReference>
<dbReference type="GO" id="GO:0032264">
    <property type="term" value="P:IMP salvage"/>
    <property type="evidence" value="ECO:0007669"/>
    <property type="project" value="UniProtKB-UniPathway"/>
</dbReference>
<dbReference type="GO" id="GO:0006166">
    <property type="term" value="P:purine ribonucleoside salvage"/>
    <property type="evidence" value="ECO:0007669"/>
    <property type="project" value="UniProtKB-KW"/>
</dbReference>
<dbReference type="CDD" id="cd06223">
    <property type="entry name" value="PRTases_typeI"/>
    <property type="match status" value="1"/>
</dbReference>
<dbReference type="FunFam" id="3.40.50.2020:FF:000006">
    <property type="entry name" value="Hypoxanthine phosphoribosyltransferase"/>
    <property type="match status" value="1"/>
</dbReference>
<dbReference type="Gene3D" id="3.40.50.2020">
    <property type="match status" value="1"/>
</dbReference>
<dbReference type="InterPro" id="IPR050408">
    <property type="entry name" value="HGPRT"/>
</dbReference>
<dbReference type="InterPro" id="IPR005904">
    <property type="entry name" value="Hxn_phspho_trans"/>
</dbReference>
<dbReference type="InterPro" id="IPR000836">
    <property type="entry name" value="PRibTrfase_dom"/>
</dbReference>
<dbReference type="InterPro" id="IPR029057">
    <property type="entry name" value="PRTase-like"/>
</dbReference>
<dbReference type="NCBIfam" id="TIGR01203">
    <property type="entry name" value="HGPRTase"/>
    <property type="match status" value="1"/>
</dbReference>
<dbReference type="PANTHER" id="PTHR43340:SF1">
    <property type="entry name" value="HYPOXANTHINE PHOSPHORIBOSYLTRANSFERASE"/>
    <property type="match status" value="1"/>
</dbReference>
<dbReference type="PANTHER" id="PTHR43340">
    <property type="entry name" value="HYPOXANTHINE-GUANINE PHOSPHORIBOSYLTRANSFERASE"/>
    <property type="match status" value="1"/>
</dbReference>
<dbReference type="Pfam" id="PF00156">
    <property type="entry name" value="Pribosyltran"/>
    <property type="match status" value="1"/>
</dbReference>
<dbReference type="SUPFAM" id="SSF53271">
    <property type="entry name" value="PRTase-like"/>
    <property type="match status" value="1"/>
</dbReference>
<gene>
    <name type="primary">hpt</name>
    <name type="ordered locus">SACOL0554</name>
</gene>
<evidence type="ECO:0000250" key="1"/>
<evidence type="ECO:0000250" key="2">
    <source>
        <dbReference type="UniProtKB" id="P0A9M2"/>
    </source>
</evidence>
<evidence type="ECO:0000250" key="3">
    <source>
        <dbReference type="UniProtKB" id="P9WHQ9"/>
    </source>
</evidence>
<evidence type="ECO:0000305" key="4"/>
<organism>
    <name type="scientific">Staphylococcus aureus (strain COL)</name>
    <dbReference type="NCBI Taxonomy" id="93062"/>
    <lineage>
        <taxon>Bacteria</taxon>
        <taxon>Bacillati</taxon>
        <taxon>Bacillota</taxon>
        <taxon>Bacilli</taxon>
        <taxon>Bacillales</taxon>
        <taxon>Staphylococcaceae</taxon>
        <taxon>Staphylococcus</taxon>
    </lineage>
</organism>
<comment type="function">
    <text evidence="3">Purine salvage pathway enzyme that catalyzes the transfer of the ribosyl-5-phosphate group from 5-phospho-alpha-D-ribose 1-diphosphate (PRPP) to the N9 position of the 6-oxopurines hypoxanthine and guanine to form the corresponding ribonucleotides IMP (inosine 5'-monophosphate) and GMP (guanosine 5'-monophosphate), with the release of PPi.</text>
</comment>
<comment type="catalytic activity">
    <reaction evidence="3">
        <text>IMP + diphosphate = hypoxanthine + 5-phospho-alpha-D-ribose 1-diphosphate</text>
        <dbReference type="Rhea" id="RHEA:17973"/>
        <dbReference type="ChEBI" id="CHEBI:17368"/>
        <dbReference type="ChEBI" id="CHEBI:33019"/>
        <dbReference type="ChEBI" id="CHEBI:58017"/>
        <dbReference type="ChEBI" id="CHEBI:58053"/>
        <dbReference type="EC" id="2.4.2.8"/>
    </reaction>
    <physiologicalReaction direction="right-to-left" evidence="3">
        <dbReference type="Rhea" id="RHEA:17975"/>
    </physiologicalReaction>
</comment>
<comment type="catalytic activity">
    <reaction evidence="3">
        <text>GMP + diphosphate = guanine + 5-phospho-alpha-D-ribose 1-diphosphate</text>
        <dbReference type="Rhea" id="RHEA:25424"/>
        <dbReference type="ChEBI" id="CHEBI:16235"/>
        <dbReference type="ChEBI" id="CHEBI:33019"/>
        <dbReference type="ChEBI" id="CHEBI:58017"/>
        <dbReference type="ChEBI" id="CHEBI:58115"/>
        <dbReference type="EC" id="2.4.2.8"/>
    </reaction>
    <physiologicalReaction direction="right-to-left" evidence="3">
        <dbReference type="Rhea" id="RHEA:25426"/>
    </physiologicalReaction>
</comment>
<comment type="cofactor">
    <cofactor evidence="3">
        <name>Mg(2+)</name>
        <dbReference type="ChEBI" id="CHEBI:18420"/>
    </cofactor>
</comment>
<comment type="pathway">
    <text evidence="3">Purine metabolism; IMP biosynthesis via salvage pathway; IMP from hypoxanthine: step 1/1.</text>
</comment>
<comment type="pathway">
    <text evidence="3">Purine metabolism; GMP biosynthesis via salvage pathway; GMP from guanine: step 1/1.</text>
</comment>
<comment type="subcellular location">
    <subcellularLocation>
        <location evidence="1">Cytoplasm</location>
    </subcellularLocation>
</comment>
<comment type="similarity">
    <text evidence="4">Belongs to the purine/pyrimidine phosphoribosyltransferase family.</text>
</comment>
<proteinExistence type="inferred from homology"/>
<name>HGPRT_STAAC</name>
<keyword id="KW-0963">Cytoplasm</keyword>
<keyword id="KW-0328">Glycosyltransferase</keyword>
<keyword id="KW-0460">Magnesium</keyword>
<keyword id="KW-0479">Metal-binding</keyword>
<keyword id="KW-0547">Nucleotide-binding</keyword>
<keyword id="KW-0660">Purine salvage</keyword>
<keyword id="KW-0808">Transferase</keyword>
<feature type="chain" id="PRO_0000139612" description="Hypoxanthine-guanine phosphoribosyltransferase">
    <location>
        <begin position="1"/>
        <end position="179"/>
    </location>
</feature>
<feature type="active site" description="Proton acceptor" evidence="2">
    <location>
        <position position="102"/>
    </location>
</feature>
<feature type="binding site" evidence="3">
    <location>
        <position position="42"/>
    </location>
    <ligand>
        <name>diphosphate</name>
        <dbReference type="ChEBI" id="CHEBI:33019"/>
    </ligand>
</feature>
<feature type="binding site" evidence="3">
    <location>
        <position position="43"/>
    </location>
    <ligand>
        <name>diphosphate</name>
        <dbReference type="ChEBI" id="CHEBI:33019"/>
    </ligand>
</feature>
<feature type="binding site" evidence="3">
    <location>
        <position position="98"/>
    </location>
    <ligand>
        <name>Mg(2+)</name>
        <dbReference type="ChEBI" id="CHEBI:18420"/>
    </ligand>
</feature>
<feature type="binding site" evidence="3">
    <location>
        <position position="99"/>
    </location>
    <ligand>
        <name>Mg(2+)</name>
        <dbReference type="ChEBI" id="CHEBI:18420"/>
    </ligand>
</feature>
<feature type="binding site" evidence="3">
    <location>
        <position position="130"/>
    </location>
    <ligand>
        <name>GMP</name>
        <dbReference type="ChEBI" id="CHEBI:58115"/>
    </ligand>
</feature>
<feature type="binding site" evidence="3">
    <location>
        <begin position="151"/>
        <end position="152"/>
    </location>
    <ligand>
        <name>GMP</name>
        <dbReference type="ChEBI" id="CHEBI:58115"/>
    </ligand>
</feature>
<feature type="binding site" evidence="3">
    <location>
        <position position="158"/>
    </location>
    <ligand>
        <name>GMP</name>
        <dbReference type="ChEBI" id="CHEBI:58115"/>
    </ligand>
</feature>
<feature type="binding site" evidence="3">
    <location>
        <position position="164"/>
    </location>
    <ligand>
        <name>diphosphate</name>
        <dbReference type="ChEBI" id="CHEBI:33019"/>
    </ligand>
</feature>
<accession>Q5HIG5</accession>